<comment type="function">
    <text evidence="1">NAD-binding protein involved in the addition of a carboxymethylaminomethyl (cmnm) group at the wobble position (U34) of certain tRNAs, forming tRNA-cmnm(5)s(2)U34.</text>
</comment>
<comment type="cofactor">
    <cofactor evidence="1">
        <name>FAD</name>
        <dbReference type="ChEBI" id="CHEBI:57692"/>
    </cofactor>
</comment>
<comment type="subunit">
    <text evidence="1">Homodimer. Heterotetramer of two MnmE and two MnmG subunits.</text>
</comment>
<comment type="subcellular location">
    <subcellularLocation>
        <location evidence="1">Cytoplasm</location>
    </subcellularLocation>
</comment>
<comment type="similarity">
    <text evidence="1">Belongs to the MnmG family.</text>
</comment>
<protein>
    <recommendedName>
        <fullName evidence="1">tRNA uridine 5-carboxymethylaminomethyl modification enzyme MnmG</fullName>
    </recommendedName>
    <alternativeName>
        <fullName evidence="1">Glucose-inhibited division protein A</fullName>
    </alternativeName>
</protein>
<reference key="1">
    <citation type="journal article" date="2007" name="Genome Res.">
        <title>Genome sequence of a proteolytic (Group I) Clostridium botulinum strain Hall A and comparative analysis of the clostridial genomes.</title>
        <authorList>
            <person name="Sebaihia M."/>
            <person name="Peck M.W."/>
            <person name="Minton N.P."/>
            <person name="Thomson N.R."/>
            <person name="Holden M.T.G."/>
            <person name="Mitchell W.J."/>
            <person name="Carter A.T."/>
            <person name="Bentley S.D."/>
            <person name="Mason D.R."/>
            <person name="Crossman L."/>
            <person name="Paul C.J."/>
            <person name="Ivens A."/>
            <person name="Wells-Bennik M.H.J."/>
            <person name="Davis I.J."/>
            <person name="Cerdeno-Tarraga A.M."/>
            <person name="Churcher C."/>
            <person name="Quail M.A."/>
            <person name="Chillingworth T."/>
            <person name="Feltwell T."/>
            <person name="Fraser A."/>
            <person name="Goodhead I."/>
            <person name="Hance Z."/>
            <person name="Jagels K."/>
            <person name="Larke N."/>
            <person name="Maddison M."/>
            <person name="Moule S."/>
            <person name="Mungall K."/>
            <person name="Norbertczak H."/>
            <person name="Rabbinowitsch E."/>
            <person name="Sanders M."/>
            <person name="Simmonds M."/>
            <person name="White B."/>
            <person name="Whithead S."/>
            <person name="Parkhill J."/>
        </authorList>
    </citation>
    <scope>NUCLEOTIDE SEQUENCE [LARGE SCALE GENOMIC DNA]</scope>
    <source>
        <strain>Hall / ATCC 3502 / NCTC 13319 / Type A</strain>
    </source>
</reference>
<reference key="2">
    <citation type="journal article" date="2007" name="PLoS ONE">
        <title>Analysis of the neurotoxin complex genes in Clostridium botulinum A1-A4 and B1 strains: BoNT/A3, /Ba4 and /B1 clusters are located within plasmids.</title>
        <authorList>
            <person name="Smith T.J."/>
            <person name="Hill K.K."/>
            <person name="Foley B.T."/>
            <person name="Detter J.C."/>
            <person name="Munk A.C."/>
            <person name="Bruce D.C."/>
            <person name="Doggett N.A."/>
            <person name="Smith L.A."/>
            <person name="Marks J.D."/>
            <person name="Xie G."/>
            <person name="Brettin T.S."/>
        </authorList>
    </citation>
    <scope>NUCLEOTIDE SEQUENCE [LARGE SCALE GENOMIC DNA]</scope>
    <source>
        <strain>Hall / ATCC 3502 / NCTC 13319 / Type A</strain>
    </source>
</reference>
<accession>A5I815</accession>
<accession>A7G998</accession>
<sequence>MKYSAGDFDVVVIGAGHAGCEAALASARMGCKTLICTMNLDSIALMACNPNIGGTAKGHLVREIDALGGEMGINIDHTFIQSRMLNTSKGPAVHSLRAQADKKRYSERMKHLLEKEDNVVLRQLEVIEIDVEDNEVKGVLTKNGAYFTTKAIILCTGTYLKGKIIIGDIIYSSGPSGLYPANDLSQSLLDLGINLRRFKTGTPARINKRSVDFSKMIEQPGDEKIVPFSFIHNKLDKDQISCYLTYTSEETHKIIHENIHRSPLYNGSIEGVGPRYCPSIEDKIVRFPDKDKHQIFIEPEGENTEELYVGGMSSSLPEDVQIKMYRSVPGLENAEILRTAYAIEYDCIDPQQLDLTLEFKNINGLYGAGQFNGSSGYEEAAAQGLIAGINAVLKIKEKNPLILKRSDAYIGVLIDDLVTKGTNEPYRMMTSRAEYRLLLRQDNADLRLTELGYKVGLVKEDRYNKFLNRKKNVENEIERLRNMQITGKREINEFLLEKGSTELKKPISLYELIKRPELDYFKVESLDDKRPSLSDDEKEEINIIAKYEGYINKQLEQVEQFKKYEDRLIPKSINYLDIKGLRLEAIQKLEKIKPINIGQASRISGVSPADISVLLIYMERKNREN</sequence>
<keyword id="KW-0963">Cytoplasm</keyword>
<keyword id="KW-0274">FAD</keyword>
<keyword id="KW-0285">Flavoprotein</keyword>
<keyword id="KW-0520">NAD</keyword>
<keyword id="KW-1185">Reference proteome</keyword>
<keyword id="KW-0819">tRNA processing</keyword>
<organism>
    <name type="scientific">Clostridium botulinum (strain Hall / ATCC 3502 / NCTC 13319 / Type A)</name>
    <dbReference type="NCBI Taxonomy" id="441771"/>
    <lineage>
        <taxon>Bacteria</taxon>
        <taxon>Bacillati</taxon>
        <taxon>Bacillota</taxon>
        <taxon>Clostridia</taxon>
        <taxon>Eubacteriales</taxon>
        <taxon>Clostridiaceae</taxon>
        <taxon>Clostridium</taxon>
    </lineage>
</organism>
<proteinExistence type="inferred from homology"/>
<evidence type="ECO:0000255" key="1">
    <source>
        <dbReference type="HAMAP-Rule" id="MF_00129"/>
    </source>
</evidence>
<dbReference type="EMBL" id="CP000727">
    <property type="protein sequence ID" value="ABS37690.1"/>
    <property type="molecule type" value="Genomic_DNA"/>
</dbReference>
<dbReference type="EMBL" id="AM412317">
    <property type="protein sequence ID" value="CAL85200.1"/>
    <property type="molecule type" value="Genomic_DNA"/>
</dbReference>
<dbReference type="RefSeq" id="WP_012048454.1">
    <property type="nucleotide sequence ID" value="NC_009698.1"/>
</dbReference>
<dbReference type="RefSeq" id="YP_001256120.1">
    <property type="nucleotide sequence ID" value="NC_009495.1"/>
</dbReference>
<dbReference type="RefSeq" id="YP_001389363.1">
    <property type="nucleotide sequence ID" value="NC_009698.1"/>
</dbReference>
<dbReference type="SMR" id="A5I815"/>
<dbReference type="GeneID" id="5204343"/>
<dbReference type="KEGG" id="cbh:CLC_3641"/>
<dbReference type="KEGG" id="cbo:CBO3642"/>
<dbReference type="PATRIC" id="fig|413999.7.peg.3618"/>
<dbReference type="HOGENOM" id="CLU_007831_2_2_9"/>
<dbReference type="PRO" id="PR:A5I815"/>
<dbReference type="Proteomes" id="UP000001986">
    <property type="component" value="Chromosome"/>
</dbReference>
<dbReference type="GO" id="GO:0005829">
    <property type="term" value="C:cytosol"/>
    <property type="evidence" value="ECO:0000318"/>
    <property type="project" value="GO_Central"/>
</dbReference>
<dbReference type="GO" id="GO:0050660">
    <property type="term" value="F:flavin adenine dinucleotide binding"/>
    <property type="evidence" value="ECO:0000318"/>
    <property type="project" value="GO_Central"/>
</dbReference>
<dbReference type="GO" id="GO:0030488">
    <property type="term" value="P:tRNA methylation"/>
    <property type="evidence" value="ECO:0000318"/>
    <property type="project" value="GO_Central"/>
</dbReference>
<dbReference type="GO" id="GO:0002098">
    <property type="term" value="P:tRNA wobble uridine modification"/>
    <property type="evidence" value="ECO:0000318"/>
    <property type="project" value="GO_Central"/>
</dbReference>
<dbReference type="FunFam" id="1.10.10.1800:FF:000001">
    <property type="entry name" value="tRNA uridine 5-carboxymethylaminomethyl modification enzyme MnmG"/>
    <property type="match status" value="1"/>
</dbReference>
<dbReference type="FunFam" id="1.10.150.570:FF:000001">
    <property type="entry name" value="tRNA uridine 5-carboxymethylaminomethyl modification enzyme MnmG"/>
    <property type="match status" value="1"/>
</dbReference>
<dbReference type="FunFam" id="3.50.50.60:FF:000002">
    <property type="entry name" value="tRNA uridine 5-carboxymethylaminomethyl modification enzyme MnmG"/>
    <property type="match status" value="1"/>
</dbReference>
<dbReference type="FunFam" id="3.50.50.60:FF:000063">
    <property type="entry name" value="tRNA uridine 5-carboxymethylaminomethyl modification enzyme MnmG"/>
    <property type="match status" value="1"/>
</dbReference>
<dbReference type="Gene3D" id="3.50.50.60">
    <property type="entry name" value="FAD/NAD(P)-binding domain"/>
    <property type="match status" value="2"/>
</dbReference>
<dbReference type="Gene3D" id="1.10.150.570">
    <property type="entry name" value="GidA associated domain, C-terminal subdomain"/>
    <property type="match status" value="1"/>
</dbReference>
<dbReference type="Gene3D" id="1.10.10.1800">
    <property type="entry name" value="tRNA uridine 5-carboxymethylaminomethyl modification enzyme MnmG/GidA"/>
    <property type="match status" value="1"/>
</dbReference>
<dbReference type="HAMAP" id="MF_00129">
    <property type="entry name" value="MnmG_GidA"/>
    <property type="match status" value="1"/>
</dbReference>
<dbReference type="InterPro" id="IPR036188">
    <property type="entry name" value="FAD/NAD-bd_sf"/>
</dbReference>
<dbReference type="InterPro" id="IPR049312">
    <property type="entry name" value="GIDA_C_N"/>
</dbReference>
<dbReference type="InterPro" id="IPR004416">
    <property type="entry name" value="MnmG"/>
</dbReference>
<dbReference type="InterPro" id="IPR002218">
    <property type="entry name" value="MnmG-rel"/>
</dbReference>
<dbReference type="InterPro" id="IPR020595">
    <property type="entry name" value="MnmG-rel_CS"/>
</dbReference>
<dbReference type="InterPro" id="IPR026904">
    <property type="entry name" value="MnmG_C"/>
</dbReference>
<dbReference type="InterPro" id="IPR047001">
    <property type="entry name" value="MnmG_C_subdom"/>
</dbReference>
<dbReference type="InterPro" id="IPR044920">
    <property type="entry name" value="MnmG_C_subdom_sf"/>
</dbReference>
<dbReference type="InterPro" id="IPR040131">
    <property type="entry name" value="MnmG_N"/>
</dbReference>
<dbReference type="NCBIfam" id="TIGR00136">
    <property type="entry name" value="mnmG_gidA"/>
    <property type="match status" value="1"/>
</dbReference>
<dbReference type="PANTHER" id="PTHR11806">
    <property type="entry name" value="GLUCOSE INHIBITED DIVISION PROTEIN A"/>
    <property type="match status" value="1"/>
</dbReference>
<dbReference type="PANTHER" id="PTHR11806:SF0">
    <property type="entry name" value="PROTEIN MTO1 HOMOLOG, MITOCHONDRIAL"/>
    <property type="match status" value="1"/>
</dbReference>
<dbReference type="Pfam" id="PF01134">
    <property type="entry name" value="GIDA"/>
    <property type="match status" value="1"/>
</dbReference>
<dbReference type="Pfam" id="PF21680">
    <property type="entry name" value="GIDA_C_1st"/>
    <property type="match status" value="1"/>
</dbReference>
<dbReference type="Pfam" id="PF13932">
    <property type="entry name" value="SAM_GIDA_C"/>
    <property type="match status" value="1"/>
</dbReference>
<dbReference type="PRINTS" id="PR00411">
    <property type="entry name" value="PNDRDTASEI"/>
</dbReference>
<dbReference type="SMART" id="SM01228">
    <property type="entry name" value="GIDA_assoc_3"/>
    <property type="match status" value="1"/>
</dbReference>
<dbReference type="SUPFAM" id="SSF51905">
    <property type="entry name" value="FAD/NAD(P)-binding domain"/>
    <property type="match status" value="1"/>
</dbReference>
<dbReference type="PROSITE" id="PS01280">
    <property type="entry name" value="GIDA_1"/>
    <property type="match status" value="1"/>
</dbReference>
<dbReference type="PROSITE" id="PS01281">
    <property type="entry name" value="GIDA_2"/>
    <property type="match status" value="1"/>
</dbReference>
<feature type="chain" id="PRO_1000016582" description="tRNA uridine 5-carboxymethylaminomethyl modification enzyme MnmG">
    <location>
        <begin position="1"/>
        <end position="625"/>
    </location>
</feature>
<feature type="binding site" evidence="1">
    <location>
        <begin position="14"/>
        <end position="19"/>
    </location>
    <ligand>
        <name>FAD</name>
        <dbReference type="ChEBI" id="CHEBI:57692"/>
    </ligand>
</feature>
<feature type="binding site" evidence="1">
    <location>
        <begin position="273"/>
        <end position="287"/>
    </location>
    <ligand>
        <name>NAD(+)</name>
        <dbReference type="ChEBI" id="CHEBI:57540"/>
    </ligand>
</feature>
<name>MNMG_CLOBH</name>
<gene>
    <name evidence="1" type="primary">mnmG</name>
    <name evidence="1" type="synonym">gidA</name>
    <name type="ordered locus">CBO3642</name>
    <name type="ordered locus">CLC_3641</name>
</gene>